<accession>Q54PV7</accession>
<feature type="chain" id="PRO_0000331243" description="Eukaryotic translation initiation factor 2A">
    <location>
        <begin position="1"/>
        <end position="608"/>
    </location>
</feature>
<feature type="repeat" description="WD 1">
    <location>
        <begin position="115"/>
        <end position="161"/>
    </location>
</feature>
<feature type="repeat" description="WD 2">
    <location>
        <begin position="207"/>
        <end position="255"/>
    </location>
</feature>
<feature type="repeat" description="WD 3">
    <location>
        <begin position="310"/>
        <end position="350"/>
    </location>
</feature>
<feature type="repeat" description="WD 4">
    <location>
        <begin position="351"/>
        <end position="393"/>
    </location>
</feature>
<feature type="region of interest" description="Disordered" evidence="3">
    <location>
        <begin position="1"/>
        <end position="42"/>
    </location>
</feature>
<feature type="region of interest" description="Disordered" evidence="3">
    <location>
        <begin position="466"/>
        <end position="499"/>
    </location>
</feature>
<feature type="region of interest" description="Disordered" evidence="3">
    <location>
        <begin position="520"/>
        <end position="554"/>
    </location>
</feature>
<feature type="coiled-coil region" evidence="2">
    <location>
        <begin position="550"/>
        <end position="608"/>
    </location>
</feature>
<feature type="compositionally biased region" description="Low complexity" evidence="3">
    <location>
        <begin position="466"/>
        <end position="478"/>
    </location>
</feature>
<feature type="compositionally biased region" description="Low complexity" evidence="3">
    <location>
        <begin position="520"/>
        <end position="544"/>
    </location>
</feature>
<feature type="compositionally biased region" description="Basic and acidic residues" evidence="3">
    <location>
        <begin position="545"/>
        <end position="554"/>
    </location>
</feature>
<protein>
    <recommendedName>
        <fullName>Eukaryotic translation initiation factor 2A</fullName>
        <shortName>eIF-2A</shortName>
    </recommendedName>
</protein>
<gene>
    <name type="primary">eif2a</name>
    <name type="ORF">DDB_G0284267</name>
</gene>
<name>EIF2A_DICDI</name>
<sequence length="608" mass="68034">MSAPNNNNNNTTTTTTTSPSPSQSSPTLTSVASNSTTTTTTETLTTPKLQFVVRSKTNAYQEIGQQYGKNLNLPSYSNGDCRHVEYSKDGTLIAYVNLNEIVICNSDGGSVHSVINRPNVGMISFSPQNSFLLTWERMSEYNNNENNLIVWDIKQASILYKTSQKYCNQENWPLIKWTDDEVLAGKLISNEVHFFNGRSIGVLAKKIKLQDISSFEFAPATNGGPYKIATFVPEKGSTPGSARIYSYPTVNEYCSHLKFFKASEAKVLWNKKGNAILVHTFTDTDKSGKSYYGETGLWFLSQDGSSFNLNIKGPIHDVQWSPTLDQFMVCYGNMPSQTTLFNLKGEPLVDFGLNPRNTIRFSPNGQLLCLGGFGNLQGDMDFWDLTRYKRICGTQSHCAIYTEWSADSVHFMTAVLSPRIRVDNGVKIIKYDNTIVYQENIPELYQASWRPLNPLVFPNERIVYPSIQQQKESSPQPQKYTPPSLRNMQAAPPVVTSPPAMGAPLPSGFKVYLASAKSSSTFKPKQKPSSTTTTNNTTTTTTKPAADEPKRELTPIEKKIRNVERKLKEVEVLKEKLNSGEFIPPTAIEKINNEQKFLEELRKLQSEL</sequence>
<proteinExistence type="inferred from homology"/>
<dbReference type="EMBL" id="AAFI02000064">
    <property type="protein sequence ID" value="EAL65322.1"/>
    <property type="molecule type" value="Genomic_DNA"/>
</dbReference>
<dbReference type="RefSeq" id="XP_638688.1">
    <property type="nucleotide sequence ID" value="XM_633596.1"/>
</dbReference>
<dbReference type="SMR" id="Q54PV7"/>
<dbReference type="FunCoup" id="Q54PV7">
    <property type="interactions" value="986"/>
</dbReference>
<dbReference type="STRING" id="44689.Q54PV7"/>
<dbReference type="PaxDb" id="44689-DDB0234177"/>
<dbReference type="EnsemblProtists" id="EAL65322">
    <property type="protein sequence ID" value="EAL65322"/>
    <property type="gene ID" value="DDB_G0284267"/>
</dbReference>
<dbReference type="GeneID" id="8624518"/>
<dbReference type="KEGG" id="ddi:DDB_G0284267"/>
<dbReference type="dictyBase" id="DDB_G0284267">
    <property type="gene designation" value="eIF2a"/>
</dbReference>
<dbReference type="VEuPathDB" id="AmoebaDB:DDB_G0284267"/>
<dbReference type="eggNOG" id="KOG2315">
    <property type="taxonomic scope" value="Eukaryota"/>
</dbReference>
<dbReference type="HOGENOM" id="CLU_013809_1_0_1"/>
<dbReference type="InParanoid" id="Q54PV7"/>
<dbReference type="OMA" id="MQARWPA"/>
<dbReference type="PhylomeDB" id="Q54PV7"/>
<dbReference type="PRO" id="PR:Q54PV7"/>
<dbReference type="Proteomes" id="UP000002195">
    <property type="component" value="Chromosome 4"/>
</dbReference>
<dbReference type="GO" id="GO:0022627">
    <property type="term" value="C:cytosolic small ribosomal subunit"/>
    <property type="evidence" value="ECO:0000318"/>
    <property type="project" value="GO_Central"/>
</dbReference>
<dbReference type="GO" id="GO:0003729">
    <property type="term" value="F:mRNA binding"/>
    <property type="evidence" value="ECO:0000318"/>
    <property type="project" value="GO_Central"/>
</dbReference>
<dbReference type="GO" id="GO:0043022">
    <property type="term" value="F:ribosome binding"/>
    <property type="evidence" value="ECO:0000318"/>
    <property type="project" value="GO_Central"/>
</dbReference>
<dbReference type="GO" id="GO:0003743">
    <property type="term" value="F:translation initiation factor activity"/>
    <property type="evidence" value="ECO:0000250"/>
    <property type="project" value="dictyBase"/>
</dbReference>
<dbReference type="GO" id="GO:0000049">
    <property type="term" value="F:tRNA binding"/>
    <property type="evidence" value="ECO:0000318"/>
    <property type="project" value="GO_Central"/>
</dbReference>
<dbReference type="GO" id="GO:0006417">
    <property type="term" value="P:regulation of translation"/>
    <property type="evidence" value="ECO:0007669"/>
    <property type="project" value="UniProtKB-KW"/>
</dbReference>
<dbReference type="GO" id="GO:0006413">
    <property type="term" value="P:translational initiation"/>
    <property type="evidence" value="ECO:0000250"/>
    <property type="project" value="dictyBase"/>
</dbReference>
<dbReference type="Gene3D" id="2.130.10.10">
    <property type="entry name" value="YVTN repeat-like/Quinoprotein amine dehydrogenase"/>
    <property type="match status" value="1"/>
</dbReference>
<dbReference type="InterPro" id="IPR011387">
    <property type="entry name" value="TIF2A"/>
</dbReference>
<dbReference type="InterPro" id="IPR013979">
    <property type="entry name" value="TIF_beta_prop-like"/>
</dbReference>
<dbReference type="InterPro" id="IPR015943">
    <property type="entry name" value="WD40/YVTN_repeat-like_dom_sf"/>
</dbReference>
<dbReference type="PANTHER" id="PTHR13227">
    <property type="entry name" value="EUKARYOTIC TRANSLATION INITIATION FACTOR 2A"/>
    <property type="match status" value="1"/>
</dbReference>
<dbReference type="PANTHER" id="PTHR13227:SF0">
    <property type="entry name" value="EUKARYOTIC TRANSLATION INITIATION FACTOR 2A"/>
    <property type="match status" value="1"/>
</dbReference>
<dbReference type="Pfam" id="PF08662">
    <property type="entry name" value="eIF2A"/>
    <property type="match status" value="1"/>
</dbReference>
<dbReference type="PIRSF" id="PIRSF017222">
    <property type="entry name" value="eIF2A"/>
    <property type="match status" value="1"/>
</dbReference>
<dbReference type="SUPFAM" id="SSF82171">
    <property type="entry name" value="DPP6 N-terminal domain-like"/>
    <property type="match status" value="1"/>
</dbReference>
<organism>
    <name type="scientific">Dictyostelium discoideum</name>
    <name type="common">Social amoeba</name>
    <dbReference type="NCBI Taxonomy" id="44689"/>
    <lineage>
        <taxon>Eukaryota</taxon>
        <taxon>Amoebozoa</taxon>
        <taxon>Evosea</taxon>
        <taxon>Eumycetozoa</taxon>
        <taxon>Dictyostelia</taxon>
        <taxon>Dictyosteliales</taxon>
        <taxon>Dictyosteliaceae</taxon>
        <taxon>Dictyostelium</taxon>
    </lineage>
</organism>
<comment type="function">
    <text evidence="1">Functions in the early steps of protein synthesis of a small number of specific mRNAs. Acts by directing the binding of methionyl-tRNAi to 40S ribosomal subunits. In contrast to the eIF-2 complex, it binds methionyl-tRNAi to 40S subunits in a codon-dependent manner, whereas the eIF-2 complex binds methionyl-tRNAi to 40S subunits in a GTP-dependent manner.</text>
</comment>
<comment type="similarity">
    <text evidence="4">Belongs to the WD repeat EIF2A family.</text>
</comment>
<reference key="1">
    <citation type="journal article" date="2005" name="Nature">
        <title>The genome of the social amoeba Dictyostelium discoideum.</title>
        <authorList>
            <person name="Eichinger L."/>
            <person name="Pachebat J.A."/>
            <person name="Gloeckner G."/>
            <person name="Rajandream M.A."/>
            <person name="Sucgang R."/>
            <person name="Berriman M."/>
            <person name="Song J."/>
            <person name="Olsen R."/>
            <person name="Szafranski K."/>
            <person name="Xu Q."/>
            <person name="Tunggal B."/>
            <person name="Kummerfeld S."/>
            <person name="Madera M."/>
            <person name="Konfortov B.A."/>
            <person name="Rivero F."/>
            <person name="Bankier A.T."/>
            <person name="Lehmann R."/>
            <person name="Hamlin N."/>
            <person name="Davies R."/>
            <person name="Gaudet P."/>
            <person name="Fey P."/>
            <person name="Pilcher K."/>
            <person name="Chen G."/>
            <person name="Saunders D."/>
            <person name="Sodergren E.J."/>
            <person name="Davis P."/>
            <person name="Kerhornou A."/>
            <person name="Nie X."/>
            <person name="Hall N."/>
            <person name="Anjard C."/>
            <person name="Hemphill L."/>
            <person name="Bason N."/>
            <person name="Farbrother P."/>
            <person name="Desany B."/>
            <person name="Just E."/>
            <person name="Morio T."/>
            <person name="Rost R."/>
            <person name="Churcher C.M."/>
            <person name="Cooper J."/>
            <person name="Haydock S."/>
            <person name="van Driessche N."/>
            <person name="Cronin A."/>
            <person name="Goodhead I."/>
            <person name="Muzny D.M."/>
            <person name="Mourier T."/>
            <person name="Pain A."/>
            <person name="Lu M."/>
            <person name="Harper D."/>
            <person name="Lindsay R."/>
            <person name="Hauser H."/>
            <person name="James K.D."/>
            <person name="Quiles M."/>
            <person name="Madan Babu M."/>
            <person name="Saito T."/>
            <person name="Buchrieser C."/>
            <person name="Wardroper A."/>
            <person name="Felder M."/>
            <person name="Thangavelu M."/>
            <person name="Johnson D."/>
            <person name="Knights A."/>
            <person name="Loulseged H."/>
            <person name="Mungall K.L."/>
            <person name="Oliver K."/>
            <person name="Price C."/>
            <person name="Quail M.A."/>
            <person name="Urushihara H."/>
            <person name="Hernandez J."/>
            <person name="Rabbinowitsch E."/>
            <person name="Steffen D."/>
            <person name="Sanders M."/>
            <person name="Ma J."/>
            <person name="Kohara Y."/>
            <person name="Sharp S."/>
            <person name="Simmonds M.N."/>
            <person name="Spiegler S."/>
            <person name="Tivey A."/>
            <person name="Sugano S."/>
            <person name="White B."/>
            <person name="Walker D."/>
            <person name="Woodward J.R."/>
            <person name="Winckler T."/>
            <person name="Tanaka Y."/>
            <person name="Shaulsky G."/>
            <person name="Schleicher M."/>
            <person name="Weinstock G.M."/>
            <person name="Rosenthal A."/>
            <person name="Cox E.C."/>
            <person name="Chisholm R.L."/>
            <person name="Gibbs R.A."/>
            <person name="Loomis W.F."/>
            <person name="Platzer M."/>
            <person name="Kay R.R."/>
            <person name="Williams J.G."/>
            <person name="Dear P.H."/>
            <person name="Noegel A.A."/>
            <person name="Barrell B.G."/>
            <person name="Kuspa A."/>
        </authorList>
    </citation>
    <scope>NUCLEOTIDE SEQUENCE [LARGE SCALE GENOMIC DNA]</scope>
    <source>
        <strain>AX4</strain>
    </source>
</reference>
<keyword id="KW-0175">Coiled coil</keyword>
<keyword id="KW-0396">Initiation factor</keyword>
<keyword id="KW-0648">Protein biosynthesis</keyword>
<keyword id="KW-1185">Reference proteome</keyword>
<keyword id="KW-0677">Repeat</keyword>
<keyword id="KW-0810">Translation regulation</keyword>
<keyword id="KW-0853">WD repeat</keyword>
<evidence type="ECO:0000250" key="1">
    <source>
        <dbReference type="UniProtKB" id="Q9BY44"/>
    </source>
</evidence>
<evidence type="ECO:0000255" key="2"/>
<evidence type="ECO:0000256" key="3">
    <source>
        <dbReference type="SAM" id="MobiDB-lite"/>
    </source>
</evidence>
<evidence type="ECO:0000305" key="4"/>